<reference key="1">
    <citation type="submission" date="2006-01" db="EMBL/GenBank/DDBJ databases">
        <title>Complete sequence of Novosphingobium aromaticivorans DSM 12444.</title>
        <authorList>
            <consortium name="US DOE Joint Genome Institute"/>
            <person name="Copeland A."/>
            <person name="Lucas S."/>
            <person name="Lapidus A."/>
            <person name="Barry K."/>
            <person name="Detter J.C."/>
            <person name="Glavina T."/>
            <person name="Hammon N."/>
            <person name="Israni S."/>
            <person name="Pitluck S."/>
            <person name="Chain P."/>
            <person name="Malfatti S."/>
            <person name="Shin M."/>
            <person name="Vergez L."/>
            <person name="Schmutz J."/>
            <person name="Larimer F."/>
            <person name="Land M."/>
            <person name="Kyrpides N."/>
            <person name="Ivanova N."/>
            <person name="Fredrickson J."/>
            <person name="Balkwill D."/>
            <person name="Romine M.F."/>
            <person name="Richardson P."/>
        </authorList>
    </citation>
    <scope>NUCLEOTIDE SEQUENCE [LARGE SCALE GENOMIC DNA]</scope>
    <source>
        <strain>ATCC 700278 / DSM 12444 / CCUG 56034 / CIP 105152 / NBRC 16084 / F199</strain>
    </source>
</reference>
<evidence type="ECO:0000255" key="1">
    <source>
        <dbReference type="HAMAP-Rule" id="MF_01393"/>
    </source>
</evidence>
<organism>
    <name type="scientific">Novosphingobium aromaticivorans (strain ATCC 700278 / DSM 12444 / CCUG 56034 / CIP 105152 / NBRC 16084 / F199)</name>
    <dbReference type="NCBI Taxonomy" id="279238"/>
    <lineage>
        <taxon>Bacteria</taxon>
        <taxon>Pseudomonadati</taxon>
        <taxon>Pseudomonadota</taxon>
        <taxon>Alphaproteobacteria</taxon>
        <taxon>Sphingomonadales</taxon>
        <taxon>Sphingomonadaceae</taxon>
        <taxon>Novosphingobium</taxon>
    </lineage>
</organism>
<dbReference type="EMBL" id="CP000248">
    <property type="protein sequence ID" value="ABD25760.1"/>
    <property type="molecule type" value="Genomic_DNA"/>
</dbReference>
<dbReference type="RefSeq" id="WP_011444974.1">
    <property type="nucleotide sequence ID" value="NC_007794.1"/>
</dbReference>
<dbReference type="SMR" id="Q2G8R3"/>
<dbReference type="STRING" id="279238.Saro_1316"/>
<dbReference type="KEGG" id="nar:Saro_1316"/>
<dbReference type="eggNOG" id="COG0356">
    <property type="taxonomic scope" value="Bacteria"/>
</dbReference>
<dbReference type="HOGENOM" id="CLU_041018_0_2_5"/>
<dbReference type="Proteomes" id="UP000009134">
    <property type="component" value="Chromosome"/>
</dbReference>
<dbReference type="GO" id="GO:0005886">
    <property type="term" value="C:plasma membrane"/>
    <property type="evidence" value="ECO:0007669"/>
    <property type="project" value="UniProtKB-SubCell"/>
</dbReference>
<dbReference type="GO" id="GO:0045259">
    <property type="term" value="C:proton-transporting ATP synthase complex"/>
    <property type="evidence" value="ECO:0007669"/>
    <property type="project" value="UniProtKB-KW"/>
</dbReference>
<dbReference type="GO" id="GO:0046933">
    <property type="term" value="F:proton-transporting ATP synthase activity, rotational mechanism"/>
    <property type="evidence" value="ECO:0007669"/>
    <property type="project" value="UniProtKB-UniRule"/>
</dbReference>
<dbReference type="CDD" id="cd00310">
    <property type="entry name" value="ATP-synt_Fo_a_6"/>
    <property type="match status" value="1"/>
</dbReference>
<dbReference type="Gene3D" id="1.20.120.220">
    <property type="entry name" value="ATP synthase, F0 complex, subunit A"/>
    <property type="match status" value="1"/>
</dbReference>
<dbReference type="HAMAP" id="MF_01393">
    <property type="entry name" value="ATP_synth_a_bact"/>
    <property type="match status" value="1"/>
</dbReference>
<dbReference type="InterPro" id="IPR000568">
    <property type="entry name" value="ATP_synth_F0_asu"/>
</dbReference>
<dbReference type="InterPro" id="IPR045083">
    <property type="entry name" value="ATP_synth_F0_asu_bact/mt"/>
</dbReference>
<dbReference type="InterPro" id="IPR035908">
    <property type="entry name" value="F0_ATP_A_sf"/>
</dbReference>
<dbReference type="NCBIfam" id="TIGR01131">
    <property type="entry name" value="ATP_synt_6_or_A"/>
    <property type="match status" value="1"/>
</dbReference>
<dbReference type="NCBIfam" id="NF004482">
    <property type="entry name" value="PRK05815.2-4"/>
    <property type="match status" value="1"/>
</dbReference>
<dbReference type="PANTHER" id="PTHR11410">
    <property type="entry name" value="ATP SYNTHASE SUBUNIT A"/>
    <property type="match status" value="1"/>
</dbReference>
<dbReference type="PANTHER" id="PTHR11410:SF0">
    <property type="entry name" value="ATP SYNTHASE SUBUNIT A"/>
    <property type="match status" value="1"/>
</dbReference>
<dbReference type="Pfam" id="PF00119">
    <property type="entry name" value="ATP-synt_A"/>
    <property type="match status" value="1"/>
</dbReference>
<dbReference type="PRINTS" id="PR00123">
    <property type="entry name" value="ATPASEA"/>
</dbReference>
<dbReference type="SUPFAM" id="SSF81336">
    <property type="entry name" value="F1F0 ATP synthase subunit A"/>
    <property type="match status" value="1"/>
</dbReference>
<feature type="chain" id="PRO_0000362358" description="ATP synthase subunit a">
    <location>
        <begin position="1"/>
        <end position="260"/>
    </location>
</feature>
<feature type="transmembrane region" description="Helical" evidence="1">
    <location>
        <begin position="30"/>
        <end position="50"/>
    </location>
</feature>
<feature type="transmembrane region" description="Helical" evidence="1">
    <location>
        <begin position="96"/>
        <end position="116"/>
    </location>
</feature>
<feature type="transmembrane region" description="Helical" evidence="1">
    <location>
        <begin position="125"/>
        <end position="145"/>
    </location>
</feature>
<feature type="transmembrane region" description="Helical" evidence="1">
    <location>
        <begin position="151"/>
        <end position="171"/>
    </location>
</feature>
<feature type="transmembrane region" description="Helical" evidence="1">
    <location>
        <begin position="187"/>
        <end position="207"/>
    </location>
</feature>
<feature type="transmembrane region" description="Helical" evidence="1">
    <location>
        <begin position="213"/>
        <end position="233"/>
    </location>
</feature>
<feature type="transmembrane region" description="Helical" evidence="1">
    <location>
        <begin position="234"/>
        <end position="254"/>
    </location>
</feature>
<gene>
    <name evidence="1" type="primary">atpB</name>
    <name type="ordered locus">Saro_1316</name>
</gene>
<protein>
    <recommendedName>
        <fullName evidence="1">ATP synthase subunit a</fullName>
    </recommendedName>
    <alternativeName>
        <fullName evidence="1">ATP synthase F0 sector subunit a</fullName>
    </alternativeName>
    <alternativeName>
        <fullName evidence="1">F-ATPase subunit 6</fullName>
    </alternativeName>
</protein>
<name>ATP6_NOVAD</name>
<proteinExistence type="inferred from homology"/>
<comment type="function">
    <text evidence="1">Key component of the proton channel; it plays a direct role in the translocation of protons across the membrane.</text>
</comment>
<comment type="subunit">
    <text evidence="1">F-type ATPases have 2 components, CF(1) - the catalytic core - and CF(0) - the membrane proton channel. CF(1) has five subunits: alpha(3), beta(3), gamma(1), delta(1), epsilon(1). CF(0) has three main subunits: a(1), b(2) and c(9-12). The alpha and beta chains form an alternating ring which encloses part of the gamma chain. CF(1) is attached to CF(0) by a central stalk formed by the gamma and epsilon chains, while a peripheral stalk is formed by the delta and b chains.</text>
</comment>
<comment type="subcellular location">
    <subcellularLocation>
        <location evidence="1">Cell inner membrane</location>
        <topology evidence="1">Multi-pass membrane protein</topology>
    </subcellularLocation>
</comment>
<comment type="similarity">
    <text evidence="1">Belongs to the ATPase A chain family.</text>
</comment>
<accession>Q2G8R3</accession>
<keyword id="KW-0066">ATP synthesis</keyword>
<keyword id="KW-0997">Cell inner membrane</keyword>
<keyword id="KW-1003">Cell membrane</keyword>
<keyword id="KW-0138">CF(0)</keyword>
<keyword id="KW-0375">Hydrogen ion transport</keyword>
<keyword id="KW-0406">Ion transport</keyword>
<keyword id="KW-0472">Membrane</keyword>
<keyword id="KW-1185">Reference proteome</keyword>
<keyword id="KW-0812">Transmembrane</keyword>
<keyword id="KW-1133">Transmembrane helix</keyword>
<keyword id="KW-0813">Transport</keyword>
<sequence>MAEGKVDPVHQFTIETLFGTDHWSIGGYNIAFTNSALWMAITTAVLIVFVAGGAKRELVPGRWQMAVEGLTGFVDNLLQANIGKAGRKYLPYVFSLFAFILFANMLGLLPLALVGVHPFTATSHFTVTGVLAIMSFAIVLGVGFAKHGLHFFSLFVPHGTPVPMIPIIFPIELISFMVRPFSLGLRLFVAMMAGHVLLEVLSGFVISGTNAGVGTFFLAAVPSFLLMIGICALELLVAGIQAYVFALLTCVYLNDAENLH</sequence>